<organism>
    <name type="scientific">Bartonella henselae (strain ATCC 49882 / DSM 28221 / CCUG 30454 / Houston 1)</name>
    <name type="common">Rochalimaea henselae</name>
    <dbReference type="NCBI Taxonomy" id="283166"/>
    <lineage>
        <taxon>Bacteria</taxon>
        <taxon>Pseudomonadati</taxon>
        <taxon>Pseudomonadota</taxon>
        <taxon>Alphaproteobacteria</taxon>
        <taxon>Hyphomicrobiales</taxon>
        <taxon>Bartonellaceae</taxon>
        <taxon>Bartonella</taxon>
    </lineage>
</organism>
<proteinExistence type="inferred from homology"/>
<reference key="1">
    <citation type="journal article" date="2004" name="Proc. Natl. Acad. Sci. U.S.A.">
        <title>The louse-borne human pathogen Bartonella quintana is a genomic derivative of the zoonotic agent Bartonella henselae.</title>
        <authorList>
            <person name="Alsmark U.C.M."/>
            <person name="Frank A.C."/>
            <person name="Karlberg E.O."/>
            <person name="Legault B.-A."/>
            <person name="Ardell D.H."/>
            <person name="Canbaeck B."/>
            <person name="Eriksson A.-S."/>
            <person name="Naeslund A.K."/>
            <person name="Handley S.A."/>
            <person name="Huvet M."/>
            <person name="La Scola B."/>
            <person name="Holmberg M."/>
            <person name="Andersson S.G.E."/>
        </authorList>
    </citation>
    <scope>NUCLEOTIDE SEQUENCE [LARGE SCALE GENOMIC DNA]</scope>
    <source>
        <strain>ATCC 49882 / DSM 28221 / CCUG 30454 / Houston 1</strain>
    </source>
</reference>
<comment type="function">
    <text evidence="2">One of the essential components for the initiation of protein synthesis. Protects formylmethionyl-tRNA from spontaneous hydrolysis and promotes its binding to the 30S ribosomal subunits. Also involved in the hydrolysis of GTP during the formation of the 70S ribosomal complex.</text>
</comment>
<comment type="subcellular location">
    <subcellularLocation>
        <location evidence="2">Cytoplasm</location>
    </subcellularLocation>
</comment>
<comment type="similarity">
    <text evidence="2">Belongs to the TRAFAC class translation factor GTPase superfamily. Classic translation factor GTPase family. IF-2 subfamily.</text>
</comment>
<name>IF2_BARHE</name>
<feature type="chain" id="PRO_0000228170" description="Translation initiation factor IF-2">
    <location>
        <begin position="1"/>
        <end position="845"/>
    </location>
</feature>
<feature type="domain" description="tr-type G">
    <location>
        <begin position="343"/>
        <end position="510"/>
    </location>
</feature>
<feature type="region of interest" description="Disordered" evidence="3">
    <location>
        <begin position="44"/>
        <end position="91"/>
    </location>
</feature>
<feature type="region of interest" description="Disordered" evidence="3">
    <location>
        <begin position="119"/>
        <end position="256"/>
    </location>
</feature>
<feature type="region of interest" description="G1" evidence="1">
    <location>
        <begin position="352"/>
        <end position="359"/>
    </location>
</feature>
<feature type="region of interest" description="G2" evidence="1">
    <location>
        <begin position="377"/>
        <end position="381"/>
    </location>
</feature>
<feature type="region of interest" description="G3" evidence="1">
    <location>
        <begin position="398"/>
        <end position="401"/>
    </location>
</feature>
<feature type="region of interest" description="G4" evidence="1">
    <location>
        <begin position="452"/>
        <end position="455"/>
    </location>
</feature>
<feature type="region of interest" description="G5" evidence="1">
    <location>
        <begin position="488"/>
        <end position="490"/>
    </location>
</feature>
<feature type="compositionally biased region" description="Basic and acidic residues" evidence="3">
    <location>
        <begin position="119"/>
        <end position="129"/>
    </location>
</feature>
<feature type="compositionally biased region" description="Acidic residues" evidence="3">
    <location>
        <begin position="139"/>
        <end position="148"/>
    </location>
</feature>
<feature type="compositionally biased region" description="Polar residues" evidence="3">
    <location>
        <begin position="156"/>
        <end position="165"/>
    </location>
</feature>
<feature type="compositionally biased region" description="Basic and acidic residues" evidence="3">
    <location>
        <begin position="179"/>
        <end position="194"/>
    </location>
</feature>
<feature type="compositionally biased region" description="Basic and acidic residues" evidence="3">
    <location>
        <begin position="202"/>
        <end position="217"/>
    </location>
</feature>
<feature type="binding site" evidence="2">
    <location>
        <begin position="352"/>
        <end position="359"/>
    </location>
    <ligand>
        <name>GTP</name>
        <dbReference type="ChEBI" id="CHEBI:37565"/>
    </ligand>
</feature>
<feature type="binding site" evidence="2">
    <location>
        <begin position="398"/>
        <end position="402"/>
    </location>
    <ligand>
        <name>GTP</name>
        <dbReference type="ChEBI" id="CHEBI:37565"/>
    </ligand>
</feature>
<feature type="binding site" evidence="2">
    <location>
        <begin position="452"/>
        <end position="455"/>
    </location>
    <ligand>
        <name>GTP</name>
        <dbReference type="ChEBI" id="CHEBI:37565"/>
    </ligand>
</feature>
<sequence length="845" mass="93649">MSENNNDKITVKRTLTLKRSVLETSTVKQNFSHGRTKAVVVETKRRKITRTDEKAETPQPITKPHVAPQRSRPRFEDAKPNEPTAKSNLSSAEIEARLRALEEAHIQERIIREQAEEEARRAKEREESLRQTIQKTEIDETPQEEEEPTLQTQTPSLSPAQSQIEPINIPITPKNTTVIEKRKADETKEDDRNSRRTNLAKSEVRAPKVLKGADEKRRGKITLNSALDEEGSARGRSMAAMRRRQEKFKRAQNQEPKEKISREVILPETITIQELAQRMTERSVDVIKFLMKQGQMMKPGDVIDADVAELIAVEFGHTVKRVLESDVEEGIFNIADNPQKMQLRPPVVTIMGHVDHGKTSLLDAIRKANVVSGEAGGITQHIGAYQVEKNGQKITFIDTPGHAAFTAMRARGARVTDIAVLVVAADDSVMPQTIESINHAKAAGVPIIVAINKIDKPTANAQKVRTELLHHEVFVETMGGETLEVEVSAKTGQNLDKLLEAILLQAEILDLKADPQRTAEGVVIEAKLDRGRGSVATVLVQKGTLHPSDIIVAGNEWGRVRALIDDHGRHVKEAVPSTPIEILGMQGTPQAGDRFAVVTHEAKAREIAEYRQRLARDKAVARQTGSRGSLEQMMSKLQTTGVKEFPLIIKGDVQGSIEAIASALEKLGNEEVRARIVHSAAGGITESDISLAEASHSAVIGFNVRANKQARDCAKTQGIEIRYYNIIYDLVDDIKAAMSGLRSPEQRETFLGNAEILEVFNITKIGKVAGCLVTEGKIERGAGVRLIRDNIVIHEGKLKTLKRFKDEVNEVQSGQECGIAFENYEDIRTGDIIETFHIEHINRTL</sequence>
<protein>
    <recommendedName>
        <fullName evidence="2">Translation initiation factor IF-2</fullName>
    </recommendedName>
</protein>
<accession>Q6G4W7</accession>
<gene>
    <name evidence="2" type="primary">infB</name>
    <name type="ordered locus">BH02150</name>
</gene>
<evidence type="ECO:0000250" key="1"/>
<evidence type="ECO:0000255" key="2">
    <source>
        <dbReference type="HAMAP-Rule" id="MF_00100"/>
    </source>
</evidence>
<evidence type="ECO:0000256" key="3">
    <source>
        <dbReference type="SAM" id="MobiDB-lite"/>
    </source>
</evidence>
<dbReference type="EMBL" id="BX897699">
    <property type="protein sequence ID" value="CAF27027.1"/>
    <property type="molecule type" value="Genomic_DNA"/>
</dbReference>
<dbReference type="RefSeq" id="WP_011180166.1">
    <property type="nucleotide sequence ID" value="NC_005956.1"/>
</dbReference>
<dbReference type="SMR" id="Q6G4W7"/>
<dbReference type="PaxDb" id="283166-BH02150"/>
<dbReference type="EnsemblBacteria" id="CAF27027">
    <property type="protein sequence ID" value="CAF27027"/>
    <property type="gene ID" value="BH02150"/>
</dbReference>
<dbReference type="KEGG" id="bhe:BH02150"/>
<dbReference type="eggNOG" id="COG0532">
    <property type="taxonomic scope" value="Bacteria"/>
</dbReference>
<dbReference type="OrthoDB" id="9811804at2"/>
<dbReference type="Proteomes" id="UP000000421">
    <property type="component" value="Chromosome"/>
</dbReference>
<dbReference type="GO" id="GO:0005829">
    <property type="term" value="C:cytosol"/>
    <property type="evidence" value="ECO:0007669"/>
    <property type="project" value="TreeGrafter"/>
</dbReference>
<dbReference type="GO" id="GO:0005525">
    <property type="term" value="F:GTP binding"/>
    <property type="evidence" value="ECO:0007669"/>
    <property type="project" value="UniProtKB-KW"/>
</dbReference>
<dbReference type="GO" id="GO:0003924">
    <property type="term" value="F:GTPase activity"/>
    <property type="evidence" value="ECO:0007669"/>
    <property type="project" value="UniProtKB-UniRule"/>
</dbReference>
<dbReference type="GO" id="GO:0097216">
    <property type="term" value="F:guanosine tetraphosphate binding"/>
    <property type="evidence" value="ECO:0007669"/>
    <property type="project" value="UniProtKB-ARBA"/>
</dbReference>
<dbReference type="GO" id="GO:0003743">
    <property type="term" value="F:translation initiation factor activity"/>
    <property type="evidence" value="ECO:0007669"/>
    <property type="project" value="UniProtKB-UniRule"/>
</dbReference>
<dbReference type="CDD" id="cd01887">
    <property type="entry name" value="IF2_eIF5B"/>
    <property type="match status" value="1"/>
</dbReference>
<dbReference type="CDD" id="cd03702">
    <property type="entry name" value="IF2_mtIF2_II"/>
    <property type="match status" value="1"/>
</dbReference>
<dbReference type="CDD" id="cd03692">
    <property type="entry name" value="mtIF2_IVc"/>
    <property type="match status" value="1"/>
</dbReference>
<dbReference type="FunFam" id="2.40.30.10:FF:000007">
    <property type="entry name" value="Translation initiation factor IF-2"/>
    <property type="match status" value="1"/>
</dbReference>
<dbReference type="FunFam" id="2.40.30.10:FF:000008">
    <property type="entry name" value="Translation initiation factor IF-2"/>
    <property type="match status" value="1"/>
</dbReference>
<dbReference type="FunFam" id="3.40.50.10050:FF:000001">
    <property type="entry name" value="Translation initiation factor IF-2"/>
    <property type="match status" value="1"/>
</dbReference>
<dbReference type="FunFam" id="3.40.50.300:FF:000019">
    <property type="entry name" value="Translation initiation factor IF-2"/>
    <property type="match status" value="1"/>
</dbReference>
<dbReference type="Gene3D" id="3.40.50.300">
    <property type="entry name" value="P-loop containing nucleotide triphosphate hydrolases"/>
    <property type="match status" value="1"/>
</dbReference>
<dbReference type="Gene3D" id="2.40.30.10">
    <property type="entry name" value="Translation factors"/>
    <property type="match status" value="2"/>
</dbReference>
<dbReference type="Gene3D" id="3.40.50.10050">
    <property type="entry name" value="Translation initiation factor IF- 2, domain 3"/>
    <property type="match status" value="1"/>
</dbReference>
<dbReference type="HAMAP" id="MF_00100_B">
    <property type="entry name" value="IF_2_B"/>
    <property type="match status" value="1"/>
</dbReference>
<dbReference type="InterPro" id="IPR053905">
    <property type="entry name" value="EF-G-like_DII"/>
</dbReference>
<dbReference type="InterPro" id="IPR004161">
    <property type="entry name" value="EFTu-like_2"/>
</dbReference>
<dbReference type="InterPro" id="IPR013575">
    <property type="entry name" value="IF2_assoc_dom_bac"/>
</dbReference>
<dbReference type="InterPro" id="IPR044145">
    <property type="entry name" value="IF2_II"/>
</dbReference>
<dbReference type="InterPro" id="IPR006847">
    <property type="entry name" value="IF2_N"/>
</dbReference>
<dbReference type="InterPro" id="IPR027417">
    <property type="entry name" value="P-loop_NTPase"/>
</dbReference>
<dbReference type="InterPro" id="IPR005225">
    <property type="entry name" value="Small_GTP-bd"/>
</dbReference>
<dbReference type="InterPro" id="IPR000795">
    <property type="entry name" value="T_Tr_GTP-bd_dom"/>
</dbReference>
<dbReference type="InterPro" id="IPR000178">
    <property type="entry name" value="TF_IF2_bacterial-like"/>
</dbReference>
<dbReference type="InterPro" id="IPR015760">
    <property type="entry name" value="TIF_IF2"/>
</dbReference>
<dbReference type="InterPro" id="IPR023115">
    <property type="entry name" value="TIF_IF2_dom3"/>
</dbReference>
<dbReference type="InterPro" id="IPR036925">
    <property type="entry name" value="TIF_IF2_dom3_sf"/>
</dbReference>
<dbReference type="InterPro" id="IPR009000">
    <property type="entry name" value="Transl_B-barrel_sf"/>
</dbReference>
<dbReference type="NCBIfam" id="TIGR00487">
    <property type="entry name" value="IF-2"/>
    <property type="match status" value="1"/>
</dbReference>
<dbReference type="NCBIfam" id="TIGR00231">
    <property type="entry name" value="small_GTP"/>
    <property type="match status" value="1"/>
</dbReference>
<dbReference type="PANTHER" id="PTHR43381:SF5">
    <property type="entry name" value="TR-TYPE G DOMAIN-CONTAINING PROTEIN"/>
    <property type="match status" value="1"/>
</dbReference>
<dbReference type="PANTHER" id="PTHR43381">
    <property type="entry name" value="TRANSLATION INITIATION FACTOR IF-2-RELATED"/>
    <property type="match status" value="1"/>
</dbReference>
<dbReference type="Pfam" id="PF22042">
    <property type="entry name" value="EF-G_D2"/>
    <property type="match status" value="1"/>
</dbReference>
<dbReference type="Pfam" id="PF00009">
    <property type="entry name" value="GTP_EFTU"/>
    <property type="match status" value="1"/>
</dbReference>
<dbReference type="Pfam" id="PF03144">
    <property type="entry name" value="GTP_EFTU_D2"/>
    <property type="match status" value="1"/>
</dbReference>
<dbReference type="Pfam" id="PF11987">
    <property type="entry name" value="IF-2"/>
    <property type="match status" value="1"/>
</dbReference>
<dbReference type="Pfam" id="PF08364">
    <property type="entry name" value="IF2_assoc"/>
    <property type="match status" value="1"/>
</dbReference>
<dbReference type="Pfam" id="PF04760">
    <property type="entry name" value="IF2_N"/>
    <property type="match status" value="1"/>
</dbReference>
<dbReference type="SUPFAM" id="SSF52156">
    <property type="entry name" value="Initiation factor IF2/eIF5b, domain 3"/>
    <property type="match status" value="1"/>
</dbReference>
<dbReference type="SUPFAM" id="SSF52540">
    <property type="entry name" value="P-loop containing nucleoside triphosphate hydrolases"/>
    <property type="match status" value="1"/>
</dbReference>
<dbReference type="SUPFAM" id="SSF50447">
    <property type="entry name" value="Translation proteins"/>
    <property type="match status" value="2"/>
</dbReference>
<dbReference type="PROSITE" id="PS51722">
    <property type="entry name" value="G_TR_2"/>
    <property type="match status" value="1"/>
</dbReference>
<dbReference type="PROSITE" id="PS01176">
    <property type="entry name" value="IF2"/>
    <property type="match status" value="1"/>
</dbReference>
<keyword id="KW-0963">Cytoplasm</keyword>
<keyword id="KW-0342">GTP-binding</keyword>
<keyword id="KW-0396">Initiation factor</keyword>
<keyword id="KW-0547">Nucleotide-binding</keyword>
<keyword id="KW-0648">Protein biosynthesis</keyword>